<evidence type="ECO:0000250" key="1">
    <source>
        <dbReference type="UniProtKB" id="Q969I3"/>
    </source>
</evidence>
<evidence type="ECO:0000305" key="2"/>
<evidence type="ECO:0000312" key="3">
    <source>
        <dbReference type="HGNC" id="HGNC:37865"/>
    </source>
</evidence>
<comment type="function">
    <text evidence="1">Putative acyltransferase which transfers an acyl group to the N-terminus of glutamine. Can use phenylacetyl-CoA as an acyl donor.</text>
</comment>
<comment type="catalytic activity">
    <reaction evidence="1">
        <text>an acyl-CoA + L-glutamine = an N(2)-acyl-L-glutamine + CoA + H(+)</text>
        <dbReference type="Rhea" id="RHEA:18469"/>
        <dbReference type="ChEBI" id="CHEBI:15378"/>
        <dbReference type="ChEBI" id="CHEBI:57287"/>
        <dbReference type="ChEBI" id="CHEBI:58342"/>
        <dbReference type="ChEBI" id="CHEBI:58359"/>
        <dbReference type="ChEBI" id="CHEBI:87584"/>
        <dbReference type="EC" id="2.3.1.68"/>
    </reaction>
</comment>
<comment type="similarity">
    <text evidence="2">Belongs to the glycine N-acyltransferase family.</text>
</comment>
<feature type="chain" id="PRO_0000444477" description="Putative glycine N-acyltransferase-like protein 1B">
    <location>
        <begin position="1"/>
        <end position="302"/>
    </location>
</feature>
<organism>
    <name type="scientific">Homo sapiens</name>
    <name type="common">Human</name>
    <dbReference type="NCBI Taxonomy" id="9606"/>
    <lineage>
        <taxon>Eukaryota</taxon>
        <taxon>Metazoa</taxon>
        <taxon>Chordata</taxon>
        <taxon>Craniata</taxon>
        <taxon>Vertebrata</taxon>
        <taxon>Euteleostomi</taxon>
        <taxon>Mammalia</taxon>
        <taxon>Eutheria</taxon>
        <taxon>Euarchontoglires</taxon>
        <taxon>Primates</taxon>
        <taxon>Haplorrhini</taxon>
        <taxon>Catarrhini</taxon>
        <taxon>Hominidae</taxon>
        <taxon>Homo</taxon>
    </lineage>
</organism>
<sequence>MILLNNSERLLALFKSLARSIPESLKVYGSLFHINHGNPFNMEVLVDSWPEYQMVIIRPQKQEMTDDMDSYTNVYRVFSKDPQKSQEVLKNSEIINWKQKLQIQGFQESLGEGIRAAAFSNSVKVEHSRALLFVTEDILKLYATNKSKLGSWAETGHPDDELESETPNFKYAQLNVSYSGLVNDNWKLGMNKRSLRYIKRCLGALPAACMLGPEGVPVSWVTMDPSCEIGMGYSVEKYRRRGNGTRLIMRCMKYLCQKNIPFYGSVLEENQGVIRKTSALGFLEASCQWHQWNCYPQNLVPL</sequence>
<accession>A0A0U1RQE8</accession>
<dbReference type="EC" id="2.3.1.68" evidence="1"/>
<dbReference type="EMBL" id="AP001258">
    <property type="status" value="NOT_ANNOTATED_CDS"/>
    <property type="molecule type" value="Genomic_DNA"/>
</dbReference>
<dbReference type="CCDS" id="CCDS86204.1"/>
<dbReference type="RefSeq" id="NP_001342495.1">
    <property type="nucleotide sequence ID" value="NM_001355566.1"/>
</dbReference>
<dbReference type="SMR" id="A0A0U1RQE8"/>
<dbReference type="STRING" id="9606.ENSP00000488958"/>
<dbReference type="BioMuta" id="GLYATL1B"/>
<dbReference type="jPOST" id="A0A0U1RQE8"/>
<dbReference type="MassIVE" id="A0A0U1RQE8"/>
<dbReference type="PeptideAtlas" id="A0A0U1RQE8"/>
<dbReference type="Ensembl" id="ENST00000527482.2">
    <property type="protein sequence ID" value="ENSP00000488958.1"/>
    <property type="gene ID" value="ENSG00000255151.2"/>
</dbReference>
<dbReference type="GeneID" id="100287520"/>
<dbReference type="MANE-Select" id="ENST00000527482.2">
    <property type="protein sequence ID" value="ENSP00000488958.1"/>
    <property type="RefSeq nucleotide sequence ID" value="NM_001355566.1"/>
    <property type="RefSeq protein sequence ID" value="NP_001342495.1"/>
</dbReference>
<dbReference type="AGR" id="HGNC:37865"/>
<dbReference type="GeneCards" id="GLYATL1B"/>
<dbReference type="HGNC" id="HGNC:37865">
    <property type="gene designation" value="GLYATL1B"/>
</dbReference>
<dbReference type="HPA" id="ENSG00000255151">
    <property type="expression patterns" value="Group enriched (breast, lymphoid tissue)"/>
</dbReference>
<dbReference type="neXtProt" id="NX_A0A0U1RQE8"/>
<dbReference type="OpenTargets" id="ENSG00000255151"/>
<dbReference type="VEuPathDB" id="HostDB:ENSG00000255151"/>
<dbReference type="GeneTree" id="ENSGT00950000183133"/>
<dbReference type="InParanoid" id="A0A0U1RQE8"/>
<dbReference type="OMA" id="CHMMILE"/>
<dbReference type="OrthoDB" id="61870at2759"/>
<dbReference type="PAN-GO" id="A0A0U1RQE8">
    <property type="GO annotations" value="2 GO annotations based on evolutionary models"/>
</dbReference>
<dbReference type="Pharos" id="A0A0U1RQE8">
    <property type="development level" value="Tdark"/>
</dbReference>
<dbReference type="PRO" id="PR:A0A0U1RQE8"/>
<dbReference type="Proteomes" id="UP000005640">
    <property type="component" value="Chromosome 11"/>
</dbReference>
<dbReference type="RNAct" id="A0A0U1RQE8">
    <property type="molecule type" value="protein"/>
</dbReference>
<dbReference type="Bgee" id="ENSG00000255151">
    <property type="expression patterns" value="Expressed in vermiform appendix and 13 other cell types or tissues"/>
</dbReference>
<dbReference type="GO" id="GO:0005739">
    <property type="term" value="C:mitochondrion"/>
    <property type="evidence" value="ECO:0007669"/>
    <property type="project" value="InterPro"/>
</dbReference>
<dbReference type="GO" id="GO:0047946">
    <property type="term" value="F:glutamine N-acyltransferase activity"/>
    <property type="evidence" value="ECO:0000318"/>
    <property type="project" value="GO_Central"/>
</dbReference>
<dbReference type="GO" id="GO:0047961">
    <property type="term" value="F:glycine N-acyltransferase activity"/>
    <property type="evidence" value="ECO:0007669"/>
    <property type="project" value="InterPro"/>
</dbReference>
<dbReference type="GO" id="GO:0006541">
    <property type="term" value="P:glutamine metabolic process"/>
    <property type="evidence" value="ECO:0000318"/>
    <property type="project" value="GO_Central"/>
</dbReference>
<dbReference type="Gene3D" id="3.40.630.30">
    <property type="match status" value="1"/>
</dbReference>
<dbReference type="InterPro" id="IPR016181">
    <property type="entry name" value="Acyl_CoA_acyltransferase"/>
</dbReference>
<dbReference type="InterPro" id="IPR010313">
    <property type="entry name" value="Glycine_N-acyltransferase"/>
</dbReference>
<dbReference type="InterPro" id="IPR013652">
    <property type="entry name" value="Glycine_N-acyltransferase_C"/>
</dbReference>
<dbReference type="InterPro" id="IPR015938">
    <property type="entry name" value="Glycine_N-acyltransferase_N"/>
</dbReference>
<dbReference type="PANTHER" id="PTHR15298:SF16">
    <property type="entry name" value="GLYCINE N-ACYLTRANSFERASE-LIKE PROTEIN 1B-RELATED"/>
    <property type="match status" value="1"/>
</dbReference>
<dbReference type="PANTHER" id="PTHR15298">
    <property type="entry name" value="L-COA N-ACYLTRANSFERASE-RELATED"/>
    <property type="match status" value="1"/>
</dbReference>
<dbReference type="Pfam" id="PF08444">
    <property type="entry name" value="Gly_acyl_tr_C"/>
    <property type="match status" value="1"/>
</dbReference>
<dbReference type="Pfam" id="PF06021">
    <property type="entry name" value="Gly_acyl_tr_N"/>
    <property type="match status" value="1"/>
</dbReference>
<dbReference type="SUPFAM" id="SSF55729">
    <property type="entry name" value="Acyl-CoA N-acyltransferases (Nat)"/>
    <property type="match status" value="1"/>
</dbReference>
<protein>
    <recommendedName>
        <fullName evidence="2">Putative glycine N-acyltransferase-like protein 1B</fullName>
        <ecNumber evidence="1">2.3.1.68</ecNumber>
    </recommendedName>
</protein>
<gene>
    <name evidence="3" type="primary">GLYATL1B</name>
</gene>
<proteinExistence type="evidence at protein level"/>
<name>GLYLB_HUMAN</name>
<keyword id="KW-0012">Acyltransferase</keyword>
<keyword id="KW-1267">Proteomics identification</keyword>
<keyword id="KW-1185">Reference proteome</keyword>
<keyword id="KW-0808">Transferase</keyword>
<reference key="1">
    <citation type="journal article" date="2006" name="Nature">
        <title>Human chromosome 11 DNA sequence and analysis including novel gene identification.</title>
        <authorList>
            <person name="Taylor T.D."/>
            <person name="Noguchi H."/>
            <person name="Totoki Y."/>
            <person name="Toyoda A."/>
            <person name="Kuroki Y."/>
            <person name="Dewar K."/>
            <person name="Lloyd C."/>
            <person name="Itoh T."/>
            <person name="Takeda T."/>
            <person name="Kim D.-W."/>
            <person name="She X."/>
            <person name="Barlow K.F."/>
            <person name="Bloom T."/>
            <person name="Bruford E."/>
            <person name="Chang J.L."/>
            <person name="Cuomo C.A."/>
            <person name="Eichler E."/>
            <person name="FitzGerald M.G."/>
            <person name="Jaffe D.B."/>
            <person name="LaButti K."/>
            <person name="Nicol R."/>
            <person name="Park H.-S."/>
            <person name="Seaman C."/>
            <person name="Sougnez C."/>
            <person name="Yang X."/>
            <person name="Zimmer A.R."/>
            <person name="Zody M.C."/>
            <person name="Birren B.W."/>
            <person name="Nusbaum C."/>
            <person name="Fujiyama A."/>
            <person name="Hattori M."/>
            <person name="Rogers J."/>
            <person name="Lander E.S."/>
            <person name="Sakaki Y."/>
        </authorList>
    </citation>
    <scope>NUCLEOTIDE SEQUENCE [LARGE SCALE GENOMIC DNA]</scope>
</reference>